<proteinExistence type="evidence at protein level"/>
<comment type="function">
    <text evidence="5">Voltage-gated sodium channel inhibitor.</text>
</comment>
<comment type="subcellular location">
    <subcellularLocation>
        <location evidence="1">Secreted</location>
    </subcellularLocation>
</comment>
<comment type="tissue specificity">
    <text evidence="5">Expressed by the venom gland.</text>
</comment>
<comment type="PTM">
    <text evidence="4">Contains 2 disulfide bonds.</text>
</comment>
<comment type="mass spectrometry"/>
<comment type="similarity">
    <text evidence="4">Belongs to the scoloptoxin-15 family.</text>
</comment>
<name>TXF1A_SCODE</name>
<organism>
    <name type="scientific">Scolopendra dehaani</name>
    <name type="common">Thai centipede</name>
    <name type="synonym">Scolopendra subspinipes dehaani</name>
    <dbReference type="NCBI Taxonomy" id="2609776"/>
    <lineage>
        <taxon>Eukaryota</taxon>
        <taxon>Metazoa</taxon>
        <taxon>Ecdysozoa</taxon>
        <taxon>Arthropoda</taxon>
        <taxon>Myriapoda</taxon>
        <taxon>Chilopoda</taxon>
        <taxon>Pleurostigmophora</taxon>
        <taxon>Scolopendromorpha</taxon>
        <taxon>Scolopendridae</taxon>
        <taxon>Scolopendra</taxon>
    </lineage>
</organism>
<feature type="signal peptide" evidence="1">
    <location>
        <begin position="1"/>
        <end position="20"/>
    </location>
</feature>
<feature type="chain" id="PRO_0000446792" description="Mu-scoloptoxin(15)-Ssd1a" evidence="4">
    <location>
        <begin position="21"/>
        <end position="73"/>
    </location>
</feature>
<evidence type="ECO:0000269" key="1">
    <source>
    </source>
</evidence>
<evidence type="ECO:0000303" key="2">
    <source>
    </source>
</evidence>
<evidence type="ECO:0000303" key="3">
    <source>
    </source>
</evidence>
<evidence type="ECO:0000305" key="4"/>
<evidence type="ECO:0000305" key="5">
    <source>
    </source>
</evidence>
<dbReference type="EMBL" id="KC144793">
    <property type="status" value="NOT_ANNOTATED_CDS"/>
    <property type="molecule type" value="mRNA"/>
</dbReference>
<dbReference type="SMR" id="P0DQB8"/>
<dbReference type="GO" id="GO:0005576">
    <property type="term" value="C:extracellular region"/>
    <property type="evidence" value="ECO:0007669"/>
    <property type="project" value="UniProtKB-SubCell"/>
</dbReference>
<dbReference type="GO" id="GO:0017080">
    <property type="term" value="F:sodium channel regulator activity"/>
    <property type="evidence" value="ECO:0007669"/>
    <property type="project" value="UniProtKB-KW"/>
</dbReference>
<dbReference type="GO" id="GO:0090729">
    <property type="term" value="F:toxin activity"/>
    <property type="evidence" value="ECO:0007669"/>
    <property type="project" value="UniProtKB-KW"/>
</dbReference>
<protein>
    <recommendedName>
        <fullName evidence="3">Mu-scoloptoxin(15)-Ssd1a</fullName>
        <shortName evidence="3">Mu-SLPTX(15)-Ssd1a</shortName>
    </recommendedName>
    <alternativeName>
        <fullName evidence="2">Toxin SSD800</fullName>
    </alternativeName>
</protein>
<reference key="1">
    <citation type="journal article" date="2012" name="J. Proteome Res.">
        <title>Venomic and transcriptomic analysis of centipede Scolopendra subspinipes dehaani.</title>
        <authorList>
            <person name="Liu Z.C."/>
            <person name="Zhang R."/>
            <person name="Zhao F."/>
            <person name="Chen Z.M."/>
            <person name="Liu H.W."/>
            <person name="Wang Y.J."/>
            <person name="Jiang P."/>
            <person name="Zhang Y."/>
            <person name="Wu Y."/>
            <person name="Ding J.P."/>
            <person name="Lee W.H."/>
            <person name="Zhang Y."/>
        </authorList>
    </citation>
    <scope>NUCLEOTIDE SEQUENCE [MRNA]</scope>
    <scope>PROTEIN SEQUENCE OF 21-44</scope>
    <scope>SUBCELLULAR LOCATION</scope>
    <scope>MASS SPECTROMETRY</scope>
    <scope>FUNCTION</scope>
    <source>
        <tissue>Venom</tissue>
        <tissue>Venom gland</tissue>
    </source>
</reference>
<reference key="2">
    <citation type="journal article" date="2014" name="Mol. Biol. Evol.">
        <title>Clawing through evolution: toxin diversification and convergence in the ancient lineage Chilopoda (centipedes).</title>
        <authorList>
            <person name="Undheim E.A."/>
            <person name="Jones A."/>
            <person name="Clauser K.R."/>
            <person name="Holland J.W."/>
            <person name="Pineda S.S."/>
            <person name="King G.F."/>
            <person name="Fry B.G."/>
        </authorList>
    </citation>
    <scope>NOMENCLATURE</scope>
</reference>
<sequence>MKFHIIFCLLAALMMTSAFAEVTVEPLRHSNKNPTESECKKACADAYAKGDQSKIPEAHNFRDYYCNCHVIVQ</sequence>
<accession>P0DQB8</accession>
<keyword id="KW-0903">Direct protein sequencing</keyword>
<keyword id="KW-1015">Disulfide bond</keyword>
<keyword id="KW-0872">Ion channel impairing toxin</keyword>
<keyword id="KW-0528">Neurotoxin</keyword>
<keyword id="KW-0964">Secreted</keyword>
<keyword id="KW-0732">Signal</keyword>
<keyword id="KW-0800">Toxin</keyword>
<keyword id="KW-0738">Voltage-gated sodium channel impairing toxin</keyword>